<accession>Q3ZA07</accession>
<protein>
    <recommendedName>
        <fullName evidence="1">Leucine--tRNA ligase</fullName>
        <ecNumber evidence="1">6.1.1.4</ecNumber>
    </recommendedName>
    <alternativeName>
        <fullName evidence="1">Leucyl-tRNA synthetase</fullName>
        <shortName evidence="1">LeuRS</shortName>
    </alternativeName>
</protein>
<evidence type="ECO:0000255" key="1">
    <source>
        <dbReference type="HAMAP-Rule" id="MF_00049"/>
    </source>
</evidence>
<dbReference type="EC" id="6.1.1.4" evidence="1"/>
<dbReference type="EMBL" id="CP000027">
    <property type="protein sequence ID" value="AAW40547.1"/>
    <property type="molecule type" value="Genomic_DNA"/>
</dbReference>
<dbReference type="RefSeq" id="WP_010935997.1">
    <property type="nucleotide sequence ID" value="NC_002936.3"/>
</dbReference>
<dbReference type="SMR" id="Q3ZA07"/>
<dbReference type="FunCoup" id="Q3ZA07">
    <property type="interactions" value="374"/>
</dbReference>
<dbReference type="STRING" id="243164.DET0194"/>
<dbReference type="GeneID" id="3230512"/>
<dbReference type="KEGG" id="det:DET0194"/>
<dbReference type="PATRIC" id="fig|243164.10.peg.179"/>
<dbReference type="eggNOG" id="COG0495">
    <property type="taxonomic scope" value="Bacteria"/>
</dbReference>
<dbReference type="HOGENOM" id="CLU_004427_0_0_0"/>
<dbReference type="InParanoid" id="Q3ZA07"/>
<dbReference type="Proteomes" id="UP000008289">
    <property type="component" value="Chromosome"/>
</dbReference>
<dbReference type="GO" id="GO:0005829">
    <property type="term" value="C:cytosol"/>
    <property type="evidence" value="ECO:0007669"/>
    <property type="project" value="TreeGrafter"/>
</dbReference>
<dbReference type="GO" id="GO:0002161">
    <property type="term" value="F:aminoacyl-tRNA deacylase activity"/>
    <property type="evidence" value="ECO:0007669"/>
    <property type="project" value="InterPro"/>
</dbReference>
<dbReference type="GO" id="GO:0005524">
    <property type="term" value="F:ATP binding"/>
    <property type="evidence" value="ECO:0007669"/>
    <property type="project" value="UniProtKB-UniRule"/>
</dbReference>
<dbReference type="GO" id="GO:0004823">
    <property type="term" value="F:leucine-tRNA ligase activity"/>
    <property type="evidence" value="ECO:0007669"/>
    <property type="project" value="UniProtKB-UniRule"/>
</dbReference>
<dbReference type="GO" id="GO:0006429">
    <property type="term" value="P:leucyl-tRNA aminoacylation"/>
    <property type="evidence" value="ECO:0007669"/>
    <property type="project" value="UniProtKB-UniRule"/>
</dbReference>
<dbReference type="CDD" id="cd07958">
    <property type="entry name" value="Anticodon_Ia_Leu_BEm"/>
    <property type="match status" value="1"/>
</dbReference>
<dbReference type="CDD" id="cd00812">
    <property type="entry name" value="LeuRS_core"/>
    <property type="match status" value="1"/>
</dbReference>
<dbReference type="FunFam" id="3.40.50.620:FF:000003">
    <property type="entry name" value="Leucine--tRNA ligase"/>
    <property type="match status" value="1"/>
</dbReference>
<dbReference type="FunFam" id="3.40.50.620:FF:000056">
    <property type="entry name" value="Leucine--tRNA ligase"/>
    <property type="match status" value="1"/>
</dbReference>
<dbReference type="FunFam" id="1.10.730.10:FF:000011">
    <property type="entry name" value="Leucine--tRNA ligase chloroplastic/mitochondrial"/>
    <property type="match status" value="1"/>
</dbReference>
<dbReference type="Gene3D" id="3.10.20.590">
    <property type="match status" value="1"/>
</dbReference>
<dbReference type="Gene3D" id="3.40.50.620">
    <property type="entry name" value="HUPs"/>
    <property type="match status" value="2"/>
</dbReference>
<dbReference type="Gene3D" id="1.10.730.10">
    <property type="entry name" value="Isoleucyl-tRNA Synthetase, Domain 1"/>
    <property type="match status" value="1"/>
</dbReference>
<dbReference type="HAMAP" id="MF_00049_B">
    <property type="entry name" value="Leu_tRNA_synth_B"/>
    <property type="match status" value="1"/>
</dbReference>
<dbReference type="InterPro" id="IPR002300">
    <property type="entry name" value="aa-tRNA-synth_Ia"/>
</dbReference>
<dbReference type="InterPro" id="IPR002302">
    <property type="entry name" value="Leu-tRNA-ligase"/>
</dbReference>
<dbReference type="InterPro" id="IPR025709">
    <property type="entry name" value="Leu_tRNA-synth_edit"/>
</dbReference>
<dbReference type="InterPro" id="IPR013155">
    <property type="entry name" value="M/V/L/I-tRNA-synth_anticd-bd"/>
</dbReference>
<dbReference type="InterPro" id="IPR014729">
    <property type="entry name" value="Rossmann-like_a/b/a_fold"/>
</dbReference>
<dbReference type="InterPro" id="IPR009080">
    <property type="entry name" value="tRNAsynth_Ia_anticodon-bd"/>
</dbReference>
<dbReference type="InterPro" id="IPR009008">
    <property type="entry name" value="Val/Leu/Ile-tRNA-synth_edit"/>
</dbReference>
<dbReference type="NCBIfam" id="TIGR00396">
    <property type="entry name" value="leuS_bact"/>
    <property type="match status" value="1"/>
</dbReference>
<dbReference type="PANTHER" id="PTHR43740:SF2">
    <property type="entry name" value="LEUCINE--TRNA LIGASE, MITOCHONDRIAL"/>
    <property type="match status" value="1"/>
</dbReference>
<dbReference type="PANTHER" id="PTHR43740">
    <property type="entry name" value="LEUCYL-TRNA SYNTHETASE"/>
    <property type="match status" value="1"/>
</dbReference>
<dbReference type="Pfam" id="PF08264">
    <property type="entry name" value="Anticodon_1"/>
    <property type="match status" value="1"/>
</dbReference>
<dbReference type="Pfam" id="PF00133">
    <property type="entry name" value="tRNA-synt_1"/>
    <property type="match status" value="2"/>
</dbReference>
<dbReference type="Pfam" id="PF13603">
    <property type="entry name" value="tRNA-synt_1_2"/>
    <property type="match status" value="1"/>
</dbReference>
<dbReference type="PRINTS" id="PR00985">
    <property type="entry name" value="TRNASYNTHLEU"/>
</dbReference>
<dbReference type="SUPFAM" id="SSF47323">
    <property type="entry name" value="Anticodon-binding domain of a subclass of class I aminoacyl-tRNA synthetases"/>
    <property type="match status" value="1"/>
</dbReference>
<dbReference type="SUPFAM" id="SSF52374">
    <property type="entry name" value="Nucleotidylyl transferase"/>
    <property type="match status" value="1"/>
</dbReference>
<dbReference type="SUPFAM" id="SSF50677">
    <property type="entry name" value="ValRS/IleRS/LeuRS editing domain"/>
    <property type="match status" value="1"/>
</dbReference>
<comment type="catalytic activity">
    <reaction evidence="1">
        <text>tRNA(Leu) + L-leucine + ATP = L-leucyl-tRNA(Leu) + AMP + diphosphate</text>
        <dbReference type="Rhea" id="RHEA:11688"/>
        <dbReference type="Rhea" id="RHEA-COMP:9613"/>
        <dbReference type="Rhea" id="RHEA-COMP:9622"/>
        <dbReference type="ChEBI" id="CHEBI:30616"/>
        <dbReference type="ChEBI" id="CHEBI:33019"/>
        <dbReference type="ChEBI" id="CHEBI:57427"/>
        <dbReference type="ChEBI" id="CHEBI:78442"/>
        <dbReference type="ChEBI" id="CHEBI:78494"/>
        <dbReference type="ChEBI" id="CHEBI:456215"/>
        <dbReference type="EC" id="6.1.1.4"/>
    </reaction>
</comment>
<comment type="subcellular location">
    <subcellularLocation>
        <location evidence="1">Cytoplasm</location>
    </subcellularLocation>
</comment>
<comment type="similarity">
    <text evidence="1">Belongs to the class-I aminoacyl-tRNA synthetase family.</text>
</comment>
<name>SYL_DEHM1</name>
<gene>
    <name evidence="1" type="primary">leuS</name>
    <name type="ordered locus">DET0194</name>
</gene>
<organism>
    <name type="scientific">Dehalococcoides mccartyi (strain ATCC BAA-2266 / KCTC 15142 / 195)</name>
    <name type="common">Dehalococcoides ethenogenes (strain 195)</name>
    <dbReference type="NCBI Taxonomy" id="243164"/>
    <lineage>
        <taxon>Bacteria</taxon>
        <taxon>Bacillati</taxon>
        <taxon>Chloroflexota</taxon>
        <taxon>Dehalococcoidia</taxon>
        <taxon>Dehalococcoidales</taxon>
        <taxon>Dehalococcoidaceae</taxon>
        <taxon>Dehalococcoides</taxon>
    </lineage>
</organism>
<reference key="1">
    <citation type="journal article" date="2005" name="Science">
        <title>Genome sequence of the PCE-dechlorinating bacterium Dehalococcoides ethenogenes.</title>
        <authorList>
            <person name="Seshadri R."/>
            <person name="Adrian L."/>
            <person name="Fouts D.E."/>
            <person name="Eisen J.A."/>
            <person name="Phillippy A.M."/>
            <person name="Methe B.A."/>
            <person name="Ward N.L."/>
            <person name="Nelson W.C."/>
            <person name="DeBoy R.T."/>
            <person name="Khouri H.M."/>
            <person name="Kolonay J.F."/>
            <person name="Dodson R.J."/>
            <person name="Daugherty S.C."/>
            <person name="Brinkac L.M."/>
            <person name="Sullivan S.A."/>
            <person name="Madupu R."/>
            <person name="Nelson K.E."/>
            <person name="Kang K.H."/>
            <person name="Impraim M."/>
            <person name="Tran K."/>
            <person name="Robinson J.M."/>
            <person name="Forberger H.A."/>
            <person name="Fraser C.M."/>
            <person name="Zinder S.H."/>
            <person name="Heidelberg J.F."/>
        </authorList>
    </citation>
    <scope>NUCLEOTIDE SEQUENCE [LARGE SCALE GENOMIC DNA]</scope>
    <source>
        <strain>ATCC BAA-2266 / KCTC 15142 / 195</strain>
    </source>
</reference>
<sequence length="813" mass="92868">MAEKYNPQETEKKWQDKWAADRLYHAGEDSPKPKWYSLTMFPYTSGNLHIGHWYAEVPADCFARYKRLNGFNVMRPVGFDSFGLPAENAAIKHHIHPRIWTLNNVENMRRQLKTIGAMFDWDREVITCLPEYYKWTQWFFLKLYEAGLAYRAKAPVNWCPSCQAVLANEQVVDGTCWRCETPTTRRDLEQWFFRITNYADELKDHDGLDWPEKITAMQRNWVGKSYGAEVSFALDCPAAPEQEIKVFTTRPDTIYGVTFMVLAPEHPLVEKITTPENKAAVDEYIKKSRACTEIERLSTEREKDGVFTGAYVTNRVNGHKVPVWIGDYVLQSYGTGAVMGVPAHDERDFVFAQKYDLPVITVIAPPDYDGQPLEAAYINEGVMQNSGPFNGLPNTEGKEKVCDYLAEHGWGKKTVNYKLRDWLISRQRYWGAPIPMIYCEKCGIVPVPEKDLPVLLPEDVEFRSGGESPLKYNEGFVNTTCPVCGGKAKRETDTMDTFMCSSWYFLRYTSPGYDKGPFDPEKLRYWMPVDLYTGGAEHAVMHLFYSRFFTKALRDMGIIDFGEPFKKLFNQGIIVSNHQKMSKSKGNVVTPDNLVAEVGTDAVRAYLMFVGPWDQGGEWNDSGLSGMSRWLNRVWNLFTEEYTPQTASAEAERELKRTLHQTIKKITMDIERLRFNTVVAALMELSNSLAKFKEAAAVSAESWQNSLKTFALMLAPVAPHIAEELWANLDMEYSIHNQSWPKWDEELAKDEVITLIIQVNGKLRERLEMPAGISEDEAKETALNSTRVKPHLQGKTPASVIYVPGKLVNIVVK</sequence>
<keyword id="KW-0030">Aminoacyl-tRNA synthetase</keyword>
<keyword id="KW-0067">ATP-binding</keyword>
<keyword id="KW-0963">Cytoplasm</keyword>
<keyword id="KW-0436">Ligase</keyword>
<keyword id="KW-0547">Nucleotide-binding</keyword>
<keyword id="KW-0648">Protein biosynthesis</keyword>
<proteinExistence type="inferred from homology"/>
<feature type="chain" id="PRO_1000199192" description="Leucine--tRNA ligase">
    <location>
        <begin position="1"/>
        <end position="813"/>
    </location>
</feature>
<feature type="short sequence motif" description="'HIGH' region">
    <location>
        <begin position="42"/>
        <end position="52"/>
    </location>
</feature>
<feature type="short sequence motif" description="'KMSKS' region">
    <location>
        <begin position="580"/>
        <end position="584"/>
    </location>
</feature>
<feature type="binding site" evidence="1">
    <location>
        <position position="583"/>
    </location>
    <ligand>
        <name>ATP</name>
        <dbReference type="ChEBI" id="CHEBI:30616"/>
    </ligand>
</feature>